<protein>
    <recommendedName>
        <fullName evidence="1">Ribulose bisphosphate carboxylase large chain</fullName>
        <shortName evidence="1">RuBisCO large subunit</shortName>
        <ecNumber evidence="1">4.1.1.39</ecNumber>
    </recommendedName>
</protein>
<gene>
    <name evidence="1" type="primary">rbcL</name>
</gene>
<geneLocation type="chloroplast"/>
<organism>
    <name type="scientific">Cassia fistula</name>
    <name type="common">Golden shower tree</name>
    <dbReference type="NCBI Taxonomy" id="53852"/>
    <lineage>
        <taxon>Eukaryota</taxon>
        <taxon>Viridiplantae</taxon>
        <taxon>Streptophyta</taxon>
        <taxon>Embryophyta</taxon>
        <taxon>Tracheophyta</taxon>
        <taxon>Spermatophyta</taxon>
        <taxon>Magnoliopsida</taxon>
        <taxon>eudicotyledons</taxon>
        <taxon>Gunneridae</taxon>
        <taxon>Pentapetalae</taxon>
        <taxon>rosids</taxon>
        <taxon>fabids</taxon>
        <taxon>Fabales</taxon>
        <taxon>Fabaceae</taxon>
        <taxon>Caesalpinioideae</taxon>
        <taxon>Cassia clade</taxon>
        <taxon>Cassia</taxon>
    </lineage>
</organism>
<dbReference type="EC" id="4.1.1.39" evidence="1"/>
<dbReference type="EMBL" id="U74195">
    <property type="protein sequence ID" value="AAB67913.1"/>
    <property type="molecule type" value="Genomic_DNA"/>
</dbReference>
<dbReference type="SMR" id="O20304"/>
<dbReference type="GO" id="GO:0009507">
    <property type="term" value="C:chloroplast"/>
    <property type="evidence" value="ECO:0007669"/>
    <property type="project" value="UniProtKB-SubCell"/>
</dbReference>
<dbReference type="GO" id="GO:0000287">
    <property type="term" value="F:magnesium ion binding"/>
    <property type="evidence" value="ECO:0007669"/>
    <property type="project" value="InterPro"/>
</dbReference>
<dbReference type="GO" id="GO:0004497">
    <property type="term" value="F:monooxygenase activity"/>
    <property type="evidence" value="ECO:0007669"/>
    <property type="project" value="UniProtKB-KW"/>
</dbReference>
<dbReference type="GO" id="GO:0016984">
    <property type="term" value="F:ribulose-bisphosphate carboxylase activity"/>
    <property type="evidence" value="ECO:0007669"/>
    <property type="project" value="UniProtKB-EC"/>
</dbReference>
<dbReference type="GO" id="GO:0009853">
    <property type="term" value="P:photorespiration"/>
    <property type="evidence" value="ECO:0007669"/>
    <property type="project" value="UniProtKB-KW"/>
</dbReference>
<dbReference type="GO" id="GO:0019253">
    <property type="term" value="P:reductive pentose-phosphate cycle"/>
    <property type="evidence" value="ECO:0007669"/>
    <property type="project" value="UniProtKB-KW"/>
</dbReference>
<dbReference type="CDD" id="cd08212">
    <property type="entry name" value="RuBisCO_large_I"/>
    <property type="match status" value="1"/>
</dbReference>
<dbReference type="FunFam" id="3.20.20.110:FF:000001">
    <property type="entry name" value="Ribulose bisphosphate carboxylase large chain"/>
    <property type="match status" value="1"/>
</dbReference>
<dbReference type="FunFam" id="3.30.70.150:FF:000001">
    <property type="entry name" value="Ribulose bisphosphate carboxylase large chain"/>
    <property type="match status" value="1"/>
</dbReference>
<dbReference type="Gene3D" id="3.20.20.110">
    <property type="entry name" value="Ribulose bisphosphate carboxylase, large subunit, C-terminal domain"/>
    <property type="match status" value="1"/>
</dbReference>
<dbReference type="Gene3D" id="3.30.70.150">
    <property type="entry name" value="RuBisCO large subunit, N-terminal domain"/>
    <property type="match status" value="1"/>
</dbReference>
<dbReference type="HAMAP" id="MF_01338">
    <property type="entry name" value="RuBisCO_L_type1"/>
    <property type="match status" value="1"/>
</dbReference>
<dbReference type="InterPro" id="IPR033966">
    <property type="entry name" value="RuBisCO"/>
</dbReference>
<dbReference type="InterPro" id="IPR020878">
    <property type="entry name" value="RuBisCo_large_chain_AS"/>
</dbReference>
<dbReference type="InterPro" id="IPR000685">
    <property type="entry name" value="RuBisCO_lsu_C"/>
</dbReference>
<dbReference type="InterPro" id="IPR036376">
    <property type="entry name" value="RuBisCO_lsu_C_sf"/>
</dbReference>
<dbReference type="InterPro" id="IPR017443">
    <property type="entry name" value="RuBisCO_lsu_fd_N"/>
</dbReference>
<dbReference type="InterPro" id="IPR036422">
    <property type="entry name" value="RuBisCO_lsu_N_sf"/>
</dbReference>
<dbReference type="InterPro" id="IPR020888">
    <property type="entry name" value="RuBisCO_lsuI"/>
</dbReference>
<dbReference type="NCBIfam" id="NF003252">
    <property type="entry name" value="PRK04208.1"/>
    <property type="match status" value="1"/>
</dbReference>
<dbReference type="PANTHER" id="PTHR42704">
    <property type="entry name" value="RIBULOSE BISPHOSPHATE CARBOXYLASE"/>
    <property type="match status" value="1"/>
</dbReference>
<dbReference type="PANTHER" id="PTHR42704:SF15">
    <property type="entry name" value="RIBULOSE BISPHOSPHATE CARBOXYLASE LARGE CHAIN"/>
    <property type="match status" value="1"/>
</dbReference>
<dbReference type="Pfam" id="PF00016">
    <property type="entry name" value="RuBisCO_large"/>
    <property type="match status" value="1"/>
</dbReference>
<dbReference type="Pfam" id="PF02788">
    <property type="entry name" value="RuBisCO_large_N"/>
    <property type="match status" value="1"/>
</dbReference>
<dbReference type="SFLD" id="SFLDG01052">
    <property type="entry name" value="RuBisCO"/>
    <property type="match status" value="1"/>
</dbReference>
<dbReference type="SFLD" id="SFLDS00014">
    <property type="entry name" value="RuBisCO"/>
    <property type="match status" value="1"/>
</dbReference>
<dbReference type="SFLD" id="SFLDG00301">
    <property type="entry name" value="RuBisCO-like_proteins"/>
    <property type="match status" value="1"/>
</dbReference>
<dbReference type="SUPFAM" id="SSF51649">
    <property type="entry name" value="RuBisCo, C-terminal domain"/>
    <property type="match status" value="1"/>
</dbReference>
<dbReference type="SUPFAM" id="SSF54966">
    <property type="entry name" value="RuBisCO, large subunit, small (N-terminal) domain"/>
    <property type="match status" value="1"/>
</dbReference>
<dbReference type="PROSITE" id="PS00157">
    <property type="entry name" value="RUBISCO_LARGE"/>
    <property type="match status" value="1"/>
</dbReference>
<reference key="1">
    <citation type="journal article" date="1997" name="Am. J. Bot.">
        <title>A phylogeny of the chloroplast gene rbcL in the Leguminosae: taxonomic correlations and insights into the evolution of nodulation.</title>
        <authorList>
            <person name="Doyle J.J."/>
            <person name="Doyle J.L."/>
            <person name="Ballenger J.A."/>
            <person name="Dickson E.E."/>
            <person name="Kajita T."/>
            <person name="Ohashi H."/>
        </authorList>
    </citation>
    <scope>NUCLEOTIDE SEQUENCE [GENOMIC DNA]</scope>
</reference>
<comment type="function">
    <text evidence="1">RuBisCO catalyzes two reactions: the carboxylation of D-ribulose 1,5-bisphosphate, the primary event in carbon dioxide fixation, as well as the oxidative fragmentation of the pentose substrate in the photorespiration process. Both reactions occur simultaneously and in competition at the same active site.</text>
</comment>
<comment type="catalytic activity">
    <reaction evidence="1">
        <text>2 (2R)-3-phosphoglycerate + 2 H(+) = D-ribulose 1,5-bisphosphate + CO2 + H2O</text>
        <dbReference type="Rhea" id="RHEA:23124"/>
        <dbReference type="ChEBI" id="CHEBI:15377"/>
        <dbReference type="ChEBI" id="CHEBI:15378"/>
        <dbReference type="ChEBI" id="CHEBI:16526"/>
        <dbReference type="ChEBI" id="CHEBI:57870"/>
        <dbReference type="ChEBI" id="CHEBI:58272"/>
        <dbReference type="EC" id="4.1.1.39"/>
    </reaction>
</comment>
<comment type="catalytic activity">
    <reaction evidence="1">
        <text>D-ribulose 1,5-bisphosphate + O2 = 2-phosphoglycolate + (2R)-3-phosphoglycerate + 2 H(+)</text>
        <dbReference type="Rhea" id="RHEA:36631"/>
        <dbReference type="ChEBI" id="CHEBI:15378"/>
        <dbReference type="ChEBI" id="CHEBI:15379"/>
        <dbReference type="ChEBI" id="CHEBI:57870"/>
        <dbReference type="ChEBI" id="CHEBI:58033"/>
        <dbReference type="ChEBI" id="CHEBI:58272"/>
    </reaction>
</comment>
<comment type="cofactor">
    <cofactor evidence="1">
        <name>Mg(2+)</name>
        <dbReference type="ChEBI" id="CHEBI:18420"/>
    </cofactor>
    <text evidence="1">Binds 1 Mg(2+) ion per subunit.</text>
</comment>
<comment type="subunit">
    <text evidence="1">Heterohexadecamer of 8 large chains and 8 small chains; disulfide-linked. The disulfide link is formed within the large subunit homodimers.</text>
</comment>
<comment type="subcellular location">
    <subcellularLocation>
        <location>Plastid</location>
        <location>Chloroplast</location>
    </subcellularLocation>
</comment>
<comment type="PTM">
    <text evidence="1">The disulfide bond which can form in the large chain dimeric partners within the hexadecamer appears to be associated with oxidative stress and protein turnover.</text>
</comment>
<comment type="miscellaneous">
    <text evidence="1">The basic functional RuBisCO is composed of a large chain homodimer in a 'head-to-tail' conformation. In form I RuBisCO this homodimer is arranged in a barrel-like tetramer with the small subunits forming a tetrameric 'cap' on each end of the 'barrel'.</text>
</comment>
<comment type="similarity">
    <text evidence="1">Belongs to the RuBisCO large chain family. Type I subfamily.</text>
</comment>
<evidence type="ECO:0000255" key="1">
    <source>
        <dbReference type="HAMAP-Rule" id="MF_01338"/>
    </source>
</evidence>
<accession>O20304</accession>
<sequence length="465" mass="51639">VGFKAGVKDYKLTYYTPDYETKDTDILAAFRVTPQPGVPPEEAGAAVAAESSTGTWTTVWTDGLTSLDRYKGRCYHIEPVAGEENQYIAYVAYPLDLFEEGSVTNMFTSIVGNVFGFKALRALRLEDLRIPISYIKTFQGPPHGIQVERDKLNKYGRPLLGCTIKPKLGLSAKNYGRAVYECLRGGLDFTKDDENVNSQPFMRWRDRFCFCAEALYKAQAETGEIKGHYLNATAGTCEEMIKRAVFARELGVPIVMHDYLTGGFTANTTLAHYCRDNGLLLHIHRAMHAVIDRQKNHGMHFRVLAKALRLSGGDHIHAGTVVGKLEGEREITLGFVDLLRDDFIEKDRSRGIYFTQDWVSLPGVLPVASGGIHVWHMPALTEIFGDDSVLQFGGGTLGHPWGNAPGAVANRVALEACVQARNEGRDLAREGNEIIREASKWSPELAAACEVWKEIKFEFPAMDTL</sequence>
<feature type="chain" id="PRO_0000062398" description="Ribulose bisphosphate carboxylase large chain">
    <location>
        <begin position="1" status="less than"/>
        <end position="465"/>
    </location>
</feature>
<feature type="active site" description="Proton acceptor" evidence="1">
    <location>
        <position position="165"/>
    </location>
</feature>
<feature type="active site" description="Proton acceptor" evidence="1">
    <location>
        <position position="284"/>
    </location>
</feature>
<feature type="binding site" description="in homodimeric partner" evidence="1">
    <location>
        <position position="113"/>
    </location>
    <ligand>
        <name>substrate</name>
    </ligand>
</feature>
<feature type="binding site" evidence="1">
    <location>
        <position position="163"/>
    </location>
    <ligand>
        <name>substrate</name>
    </ligand>
</feature>
<feature type="binding site" evidence="1">
    <location>
        <position position="167"/>
    </location>
    <ligand>
        <name>substrate</name>
    </ligand>
</feature>
<feature type="binding site" description="via carbamate group" evidence="1">
    <location>
        <position position="191"/>
    </location>
    <ligand>
        <name>Mg(2+)</name>
        <dbReference type="ChEBI" id="CHEBI:18420"/>
    </ligand>
</feature>
<feature type="binding site" evidence="1">
    <location>
        <position position="193"/>
    </location>
    <ligand>
        <name>Mg(2+)</name>
        <dbReference type="ChEBI" id="CHEBI:18420"/>
    </ligand>
</feature>
<feature type="binding site" evidence="1">
    <location>
        <position position="194"/>
    </location>
    <ligand>
        <name>Mg(2+)</name>
        <dbReference type="ChEBI" id="CHEBI:18420"/>
    </ligand>
</feature>
<feature type="binding site" evidence="1">
    <location>
        <position position="285"/>
    </location>
    <ligand>
        <name>substrate</name>
    </ligand>
</feature>
<feature type="binding site" evidence="1">
    <location>
        <position position="317"/>
    </location>
    <ligand>
        <name>substrate</name>
    </ligand>
</feature>
<feature type="binding site" evidence="1">
    <location>
        <position position="369"/>
    </location>
    <ligand>
        <name>substrate</name>
    </ligand>
</feature>
<feature type="site" description="Transition state stabilizer" evidence="1">
    <location>
        <position position="324"/>
    </location>
</feature>
<feature type="modified residue" description="N6,N6,N6-trimethyllysine" evidence="1">
    <location>
        <position position="4"/>
    </location>
</feature>
<feature type="modified residue" description="N6-carboxylysine" evidence="1">
    <location>
        <position position="191"/>
    </location>
</feature>
<feature type="disulfide bond" description="Interchain; in linked form" evidence="1">
    <location>
        <position position="237"/>
    </location>
</feature>
<feature type="non-terminal residue">
    <location>
        <position position="1"/>
    </location>
</feature>
<name>RBL_CASFS</name>
<proteinExistence type="inferred from homology"/>
<keyword id="KW-0113">Calvin cycle</keyword>
<keyword id="KW-0120">Carbon dioxide fixation</keyword>
<keyword id="KW-0150">Chloroplast</keyword>
<keyword id="KW-1015">Disulfide bond</keyword>
<keyword id="KW-0456">Lyase</keyword>
<keyword id="KW-0460">Magnesium</keyword>
<keyword id="KW-0479">Metal-binding</keyword>
<keyword id="KW-0488">Methylation</keyword>
<keyword id="KW-0503">Monooxygenase</keyword>
<keyword id="KW-0560">Oxidoreductase</keyword>
<keyword id="KW-0601">Photorespiration</keyword>
<keyword id="KW-0602">Photosynthesis</keyword>
<keyword id="KW-0934">Plastid</keyword>